<gene>
    <name type="primary">comA</name>
    <name type="ordered locus">SP_0042</name>
</gene>
<organism>
    <name type="scientific">Streptococcus pneumoniae serotype 4 (strain ATCC BAA-334 / TIGR4)</name>
    <dbReference type="NCBI Taxonomy" id="170187"/>
    <lineage>
        <taxon>Bacteria</taxon>
        <taxon>Bacillati</taxon>
        <taxon>Bacillota</taxon>
        <taxon>Bacilli</taxon>
        <taxon>Lactobacillales</taxon>
        <taxon>Streptococcaceae</taxon>
        <taxon>Streptococcus</taxon>
    </lineage>
</organism>
<dbReference type="EC" id="3.4.22.-"/>
<dbReference type="EC" id="7.4.2.-"/>
<dbReference type="EMBL" id="M36180">
    <property type="protein sequence ID" value="AAA69510.1"/>
    <property type="molecule type" value="Genomic_DNA"/>
</dbReference>
<dbReference type="EMBL" id="AE005672">
    <property type="protein sequence ID" value="AAK74231.1"/>
    <property type="molecule type" value="Genomic_DNA"/>
</dbReference>
<dbReference type="PIR" id="A39203">
    <property type="entry name" value="A39203"/>
</dbReference>
<dbReference type="PIR" id="C97877">
    <property type="entry name" value="C97877"/>
</dbReference>
<dbReference type="PIR" id="F95004">
    <property type="entry name" value="F95004"/>
</dbReference>
<dbReference type="RefSeq" id="WP_000668284.1">
    <property type="nucleotide sequence ID" value="NC_003028.3"/>
</dbReference>
<dbReference type="SMR" id="Q03727"/>
<dbReference type="MEROPS" id="C39.001"/>
<dbReference type="TCDB" id="3.A.1.112.1">
    <property type="family name" value="the atp-binding cassette (abc) superfamily"/>
</dbReference>
<dbReference type="PaxDb" id="170187-SP_0042"/>
<dbReference type="EnsemblBacteria" id="AAK74231">
    <property type="protein sequence ID" value="AAK74231"/>
    <property type="gene ID" value="SP_0042"/>
</dbReference>
<dbReference type="KEGG" id="spn:SP_0042"/>
<dbReference type="eggNOG" id="COG2274">
    <property type="taxonomic scope" value="Bacteria"/>
</dbReference>
<dbReference type="PhylomeDB" id="Q03727"/>
<dbReference type="BioCyc" id="SPNE170187:G1FZB-47-MONOMER"/>
<dbReference type="Proteomes" id="UP000000585">
    <property type="component" value="Chromosome"/>
</dbReference>
<dbReference type="GO" id="GO:0005886">
    <property type="term" value="C:plasma membrane"/>
    <property type="evidence" value="ECO:0007669"/>
    <property type="project" value="UniProtKB-SubCell"/>
</dbReference>
<dbReference type="GO" id="GO:0043214">
    <property type="term" value="F:ABC-type bacteriocin transporter activity"/>
    <property type="evidence" value="ECO:0007669"/>
    <property type="project" value="InterPro"/>
</dbReference>
<dbReference type="GO" id="GO:0015421">
    <property type="term" value="F:ABC-type oligopeptide transporter activity"/>
    <property type="evidence" value="ECO:0007669"/>
    <property type="project" value="TreeGrafter"/>
</dbReference>
<dbReference type="GO" id="GO:0005524">
    <property type="term" value="F:ATP binding"/>
    <property type="evidence" value="ECO:0007669"/>
    <property type="project" value="UniProtKB-KW"/>
</dbReference>
<dbReference type="GO" id="GO:0016887">
    <property type="term" value="F:ATP hydrolysis activity"/>
    <property type="evidence" value="ECO:0007669"/>
    <property type="project" value="InterPro"/>
</dbReference>
<dbReference type="GO" id="GO:0008234">
    <property type="term" value="F:cysteine-type peptidase activity"/>
    <property type="evidence" value="ECO:0007669"/>
    <property type="project" value="UniProtKB-KW"/>
</dbReference>
<dbReference type="GO" id="GO:0030420">
    <property type="term" value="P:establishment of competence for transformation"/>
    <property type="evidence" value="ECO:0007669"/>
    <property type="project" value="UniProtKB-KW"/>
</dbReference>
<dbReference type="GO" id="GO:0006508">
    <property type="term" value="P:proteolysis"/>
    <property type="evidence" value="ECO:0007669"/>
    <property type="project" value="UniProtKB-KW"/>
</dbReference>
<dbReference type="CDD" id="cd18570">
    <property type="entry name" value="ABC_6TM_PCAT1_LagD_like"/>
    <property type="match status" value="1"/>
</dbReference>
<dbReference type="CDD" id="cd02418">
    <property type="entry name" value="Peptidase_C39B"/>
    <property type="match status" value="1"/>
</dbReference>
<dbReference type="FunFam" id="3.40.50.300:FF:000299">
    <property type="entry name" value="ABC transporter ATP-binding protein/permease"/>
    <property type="match status" value="1"/>
</dbReference>
<dbReference type="FunFam" id="1.20.1560.10:FF:000138">
    <property type="entry name" value="Competence factor transporting ATP-binding protein/permease ComA"/>
    <property type="match status" value="1"/>
</dbReference>
<dbReference type="FunFam" id="3.90.70.10:FF:000188">
    <property type="entry name" value="Competence factor transporting ATP-binding protein/permease ComA"/>
    <property type="match status" value="1"/>
</dbReference>
<dbReference type="Gene3D" id="1.20.1560.10">
    <property type="entry name" value="ABC transporter type 1, transmembrane domain"/>
    <property type="match status" value="1"/>
</dbReference>
<dbReference type="Gene3D" id="3.90.70.10">
    <property type="entry name" value="Cysteine proteinases"/>
    <property type="match status" value="1"/>
</dbReference>
<dbReference type="Gene3D" id="3.40.50.300">
    <property type="entry name" value="P-loop containing nucleotide triphosphate hydrolases"/>
    <property type="match status" value="1"/>
</dbReference>
<dbReference type="InterPro" id="IPR003593">
    <property type="entry name" value="AAA+_ATPase"/>
</dbReference>
<dbReference type="InterPro" id="IPR011527">
    <property type="entry name" value="ABC1_TM_dom"/>
</dbReference>
<dbReference type="InterPro" id="IPR036640">
    <property type="entry name" value="ABC1_TM_sf"/>
</dbReference>
<dbReference type="InterPro" id="IPR003439">
    <property type="entry name" value="ABC_transporter-like_ATP-bd"/>
</dbReference>
<dbReference type="InterPro" id="IPR017871">
    <property type="entry name" value="ABC_transporter-like_CS"/>
</dbReference>
<dbReference type="InterPro" id="IPR027417">
    <property type="entry name" value="P-loop_NTPase"/>
</dbReference>
<dbReference type="InterPro" id="IPR005897">
    <property type="entry name" value="Pept_C39_ABC_bacteriocin"/>
</dbReference>
<dbReference type="InterPro" id="IPR005074">
    <property type="entry name" value="Peptidase_C39"/>
</dbReference>
<dbReference type="InterPro" id="IPR039421">
    <property type="entry name" value="Type_1_exporter"/>
</dbReference>
<dbReference type="NCBIfam" id="TIGR01193">
    <property type="entry name" value="bacteriocin_ABC"/>
    <property type="match status" value="1"/>
</dbReference>
<dbReference type="PANTHER" id="PTHR43394:SF1">
    <property type="entry name" value="ATP-BINDING CASSETTE SUB-FAMILY B MEMBER 10, MITOCHONDRIAL"/>
    <property type="match status" value="1"/>
</dbReference>
<dbReference type="PANTHER" id="PTHR43394">
    <property type="entry name" value="ATP-DEPENDENT PERMEASE MDL1, MITOCHONDRIAL"/>
    <property type="match status" value="1"/>
</dbReference>
<dbReference type="Pfam" id="PF00664">
    <property type="entry name" value="ABC_membrane"/>
    <property type="match status" value="1"/>
</dbReference>
<dbReference type="Pfam" id="PF00005">
    <property type="entry name" value="ABC_tran"/>
    <property type="match status" value="1"/>
</dbReference>
<dbReference type="Pfam" id="PF03412">
    <property type="entry name" value="Peptidase_C39"/>
    <property type="match status" value="1"/>
</dbReference>
<dbReference type="SMART" id="SM00382">
    <property type="entry name" value="AAA"/>
    <property type="match status" value="1"/>
</dbReference>
<dbReference type="SUPFAM" id="SSF90123">
    <property type="entry name" value="ABC transporter transmembrane region"/>
    <property type="match status" value="1"/>
</dbReference>
<dbReference type="SUPFAM" id="SSF52540">
    <property type="entry name" value="P-loop containing nucleoside triphosphate hydrolases"/>
    <property type="match status" value="1"/>
</dbReference>
<dbReference type="PROSITE" id="PS50929">
    <property type="entry name" value="ABC_TM1F"/>
    <property type="match status" value="1"/>
</dbReference>
<dbReference type="PROSITE" id="PS00211">
    <property type="entry name" value="ABC_TRANSPORTER_1"/>
    <property type="match status" value="1"/>
</dbReference>
<dbReference type="PROSITE" id="PS50893">
    <property type="entry name" value="ABC_TRANSPORTER_2"/>
    <property type="match status" value="1"/>
</dbReference>
<dbReference type="PROSITE" id="PS50990">
    <property type="entry name" value="PEPTIDASE_C39"/>
    <property type="match status" value="1"/>
</dbReference>
<comment type="function">
    <text>Required for induction of competence. Seems to transport the competence-stimulating peptide (CSP).</text>
</comment>
<comment type="subcellular location">
    <subcellularLocation>
        <location>Cell membrane</location>
        <topology>Multi-pass membrane protein</topology>
    </subcellularLocation>
</comment>
<comment type="similarity">
    <text evidence="4">Belongs to the ABC transporter superfamily. Competence factor exporter (TC 3.A.1.112.1) family.</text>
</comment>
<proteinExistence type="inferred from homology"/>
<name>COMA_STRPN</name>
<reference key="1">
    <citation type="journal article" date="1991" name="J. Bacteriol.">
        <title>Genetic transformation in Streptococcus pneumoniae: nucleotide sequence analysis shows comA, a gene required for competence induction, to be a member of the bacterial ATP-dependent transport protein family.</title>
        <authorList>
            <person name="Hui F.M."/>
            <person name="Morrison D.A."/>
        </authorList>
    </citation>
    <scope>NUCLEOTIDE SEQUENCE [GENOMIC DNA]</scope>
    <source>
        <strain>Rx / CP1200</strain>
    </source>
</reference>
<reference key="2">
    <citation type="journal article" date="2001" name="Science">
        <title>Complete genome sequence of a virulent isolate of Streptococcus pneumoniae.</title>
        <authorList>
            <person name="Tettelin H."/>
            <person name="Nelson K.E."/>
            <person name="Paulsen I.T."/>
            <person name="Eisen J.A."/>
            <person name="Read T.D."/>
            <person name="Peterson S.N."/>
            <person name="Heidelberg J.F."/>
            <person name="DeBoy R.T."/>
            <person name="Haft D.H."/>
            <person name="Dodson R.J."/>
            <person name="Durkin A.S."/>
            <person name="Gwinn M.L."/>
            <person name="Kolonay J.F."/>
            <person name="Nelson W.C."/>
            <person name="Peterson J.D."/>
            <person name="Umayam L.A."/>
            <person name="White O."/>
            <person name="Salzberg S.L."/>
            <person name="Lewis M.R."/>
            <person name="Radune D."/>
            <person name="Holtzapple E.K."/>
            <person name="Khouri H.M."/>
            <person name="Wolf A.M."/>
            <person name="Utterback T.R."/>
            <person name="Hansen C.L."/>
            <person name="McDonald L.A."/>
            <person name="Feldblyum T.V."/>
            <person name="Angiuoli S.V."/>
            <person name="Dickinson T."/>
            <person name="Hickey E.K."/>
            <person name="Holt I.E."/>
            <person name="Loftus B.J."/>
            <person name="Yang F."/>
            <person name="Smith H.O."/>
            <person name="Venter J.C."/>
            <person name="Dougherty B.A."/>
            <person name="Morrison D.A."/>
            <person name="Hollingshead S.K."/>
            <person name="Fraser C.M."/>
        </authorList>
    </citation>
    <scope>NUCLEOTIDE SEQUENCE [LARGE SCALE GENOMIC DNA]</scope>
    <source>
        <strain>ATCC BAA-334 / TIGR4</strain>
    </source>
</reference>
<reference key="3">
    <citation type="journal article" date="1995" name="Gene">
        <title>Competence for genetic transformation in Streptococcus pneumoniae: organization of a regulatory locus with homology to two lactococcin A secretion genes.</title>
        <authorList>
            <person name="Hui F.M."/>
            <person name="Zhou L."/>
            <person name="Morrison D.A."/>
        </authorList>
    </citation>
    <scope>NUCLEOTIDE SEQUENCE [GENOMIC DNA] OF 713-717</scope>
    <source>
        <strain>Rx / CP1200</strain>
    </source>
</reference>
<keyword id="KW-0067">ATP-binding</keyword>
<keyword id="KW-1003">Cell membrane</keyword>
<keyword id="KW-0178">Competence</keyword>
<keyword id="KW-0378">Hydrolase</keyword>
<keyword id="KW-0472">Membrane</keyword>
<keyword id="KW-0547">Nucleotide-binding</keyword>
<keyword id="KW-0645">Protease</keyword>
<keyword id="KW-1185">Reference proteome</keyword>
<keyword id="KW-0788">Thiol protease</keyword>
<keyword id="KW-1278">Translocase</keyword>
<keyword id="KW-0812">Transmembrane</keyword>
<keyword id="KW-1133">Transmembrane helix</keyword>
<keyword id="KW-0813">Transport</keyword>
<sequence length="717" mass="80404">MKFGKRHYRPQVDQMDCGVASLAMVFGYYGSYYFLAHLRELAKTTMDGTTALGLVKVAEEIGFETRAIKADMTLFDLPDLTFPFVAHVLKEGKLLHYYVVTGQDKDSIHIADPDPGVKLTKLPRERFEEEWTGVTLFMAPSPDYKPHKEQKNGLLSFIPILVKQRGLIANIVLATLLVTVINIVGSYYLQSIIDTYVPDQMRSTLGIISIGLVIVYIFQQILSYAQEYLLLVLGQRLSIDVILSYIKHVFHLPMSFFATRRTGEIVSRFTDANSIIDALASTILSIFLDVSTVVIISLVLFSQNTNLFFMTLLALPIYTVIIFAFMKPFEKMNRDTMEANAVLSSSIIEDINGIETIKSLTSESQRYQKIDKEFVDYLKKSFTYSRAESQQKALKKVAHLLLNVGILWMGAVLVMDGKMSLGQLITYNTLLVYFTNPLENIINLQTKLQTAQVANNRLNEVYLVASEFEEKKTVEDLSLMKGDMTFKQVHYKYGYGRDVLSDINLTVPQGSKVAFVGISGSGKTTLAKMMVNFYDPSQGEISLGSVNLNQIDKKALRQYINYLSQQPYVFNGTILENLLLGAKEGTTQEDILRAVELAEIREDIERMPLNYQTELTSDGAGISGGQRQRIALARALLTDAPVLILDEATSSLDILTEKRIVDNLIALDKTLIFIAHRLTIAERTEKVVVLDQGKIVEEGKHADLLAQGGFYAHLVNS</sequence>
<accession>Q03727</accession>
<feature type="chain" id="PRO_0000092234" description="Transport/processing ATP-binding protein ComA">
    <location>
        <begin position="1"/>
        <end position="717"/>
    </location>
</feature>
<feature type="transmembrane region" description="Helical" evidence="3">
    <location>
        <begin position="166"/>
        <end position="186"/>
    </location>
</feature>
<feature type="transmembrane region" description="Helical" evidence="3">
    <location>
        <begin position="205"/>
        <end position="225"/>
    </location>
</feature>
<feature type="transmembrane region" description="Helical" evidence="3">
    <location>
        <begin position="237"/>
        <end position="257"/>
    </location>
</feature>
<feature type="transmembrane region" description="Helical" evidence="3">
    <location>
        <begin position="282"/>
        <end position="302"/>
    </location>
</feature>
<feature type="transmembrane region" description="Helical" evidence="3">
    <location>
        <begin position="306"/>
        <end position="326"/>
    </location>
</feature>
<feature type="transmembrane region" description="Helical" evidence="3">
    <location>
        <begin position="397"/>
        <end position="417"/>
    </location>
</feature>
<feature type="domain" description="Peptidase C39" evidence="1">
    <location>
        <begin position="11"/>
        <end position="138"/>
    </location>
</feature>
<feature type="domain" description="ABC transmembrane type-1" evidence="3">
    <location>
        <begin position="168"/>
        <end position="450"/>
    </location>
</feature>
<feature type="domain" description="ABC transporter" evidence="1 2">
    <location>
        <begin position="484"/>
        <end position="717"/>
    </location>
</feature>
<feature type="active site" evidence="1">
    <location>
        <position position="17"/>
    </location>
</feature>
<feature type="binding site" evidence="1 2">
    <location>
        <begin position="517"/>
        <end position="524"/>
    </location>
    <ligand>
        <name>ATP</name>
        <dbReference type="ChEBI" id="CHEBI:30616"/>
    </ligand>
</feature>
<feature type="sequence conflict" description="In Ref. 1; AAA69510." evidence="4" ref="1">
    <original>F</original>
    <variation>L</variation>
    <location>
        <position position="218"/>
    </location>
</feature>
<feature type="sequence conflict" description="In Ref. 1; AAA69510." evidence="4" ref="1">
    <original>S</original>
    <variation>G</variation>
    <location>
        <position position="545"/>
    </location>
</feature>
<feature type="sequence conflict" description="In Ref. 1; AAA69510." evidence="4" ref="1">
    <original>S</original>
    <variation>P</variation>
    <location>
        <position position="564"/>
    </location>
</feature>
<evidence type="ECO:0000255" key="1">
    <source>
        <dbReference type="PROSITE-ProRule" id="PRU00362"/>
    </source>
</evidence>
<evidence type="ECO:0000255" key="2">
    <source>
        <dbReference type="PROSITE-ProRule" id="PRU00434"/>
    </source>
</evidence>
<evidence type="ECO:0000255" key="3">
    <source>
        <dbReference type="PROSITE-ProRule" id="PRU00441"/>
    </source>
</evidence>
<evidence type="ECO:0000305" key="4"/>
<protein>
    <recommendedName>
        <fullName>Transport/processing ATP-binding protein ComA</fullName>
        <ecNumber>3.4.22.-</ecNumber>
        <ecNumber>7.4.2.-</ecNumber>
    </recommendedName>
</protein>